<gene>
    <name evidence="1" type="primary">panD</name>
    <name type="ordered locus">Adeh_4051</name>
</gene>
<evidence type="ECO:0000255" key="1">
    <source>
        <dbReference type="HAMAP-Rule" id="MF_00446"/>
    </source>
</evidence>
<dbReference type="EC" id="4.1.1.11" evidence="1"/>
<dbReference type="EMBL" id="CP000251">
    <property type="protein sequence ID" value="ABC83815.1"/>
    <property type="molecule type" value="Genomic_DNA"/>
</dbReference>
<dbReference type="RefSeq" id="WP_011423097.1">
    <property type="nucleotide sequence ID" value="NC_007760.1"/>
</dbReference>
<dbReference type="SMR" id="Q2IGV9"/>
<dbReference type="STRING" id="290397.Adeh_4051"/>
<dbReference type="KEGG" id="ade:Adeh_4051"/>
<dbReference type="eggNOG" id="COG0853">
    <property type="taxonomic scope" value="Bacteria"/>
</dbReference>
<dbReference type="HOGENOM" id="CLU_115305_2_0_7"/>
<dbReference type="OrthoDB" id="9803983at2"/>
<dbReference type="UniPathway" id="UPA00028">
    <property type="reaction ID" value="UER00002"/>
</dbReference>
<dbReference type="Proteomes" id="UP000001935">
    <property type="component" value="Chromosome"/>
</dbReference>
<dbReference type="GO" id="GO:0005829">
    <property type="term" value="C:cytosol"/>
    <property type="evidence" value="ECO:0007669"/>
    <property type="project" value="TreeGrafter"/>
</dbReference>
<dbReference type="GO" id="GO:0004068">
    <property type="term" value="F:aspartate 1-decarboxylase activity"/>
    <property type="evidence" value="ECO:0007669"/>
    <property type="project" value="UniProtKB-UniRule"/>
</dbReference>
<dbReference type="GO" id="GO:0006523">
    <property type="term" value="P:alanine biosynthetic process"/>
    <property type="evidence" value="ECO:0007669"/>
    <property type="project" value="InterPro"/>
</dbReference>
<dbReference type="GO" id="GO:0015940">
    <property type="term" value="P:pantothenate biosynthetic process"/>
    <property type="evidence" value="ECO:0007669"/>
    <property type="project" value="UniProtKB-UniRule"/>
</dbReference>
<dbReference type="CDD" id="cd06919">
    <property type="entry name" value="Asp_decarbox"/>
    <property type="match status" value="1"/>
</dbReference>
<dbReference type="Gene3D" id="2.40.40.20">
    <property type="match status" value="1"/>
</dbReference>
<dbReference type="HAMAP" id="MF_00446">
    <property type="entry name" value="PanD"/>
    <property type="match status" value="1"/>
</dbReference>
<dbReference type="InterPro" id="IPR009010">
    <property type="entry name" value="Asp_de-COase-like_dom_sf"/>
</dbReference>
<dbReference type="InterPro" id="IPR003190">
    <property type="entry name" value="Asp_decarbox"/>
</dbReference>
<dbReference type="NCBIfam" id="TIGR00223">
    <property type="entry name" value="panD"/>
    <property type="match status" value="1"/>
</dbReference>
<dbReference type="PANTHER" id="PTHR21012">
    <property type="entry name" value="ASPARTATE 1-DECARBOXYLASE"/>
    <property type="match status" value="1"/>
</dbReference>
<dbReference type="PANTHER" id="PTHR21012:SF0">
    <property type="entry name" value="ASPARTATE 1-DECARBOXYLASE"/>
    <property type="match status" value="1"/>
</dbReference>
<dbReference type="Pfam" id="PF02261">
    <property type="entry name" value="Asp_decarbox"/>
    <property type="match status" value="1"/>
</dbReference>
<dbReference type="PIRSF" id="PIRSF006246">
    <property type="entry name" value="Asp_decarbox"/>
    <property type="match status" value="1"/>
</dbReference>
<dbReference type="SUPFAM" id="SSF50692">
    <property type="entry name" value="ADC-like"/>
    <property type="match status" value="1"/>
</dbReference>
<name>PAND_ANADE</name>
<feature type="chain" id="PRO_0000236847" description="Aspartate 1-decarboxylase beta chain" evidence="1">
    <location>
        <begin position="1"/>
        <end position="24"/>
    </location>
</feature>
<feature type="chain" id="PRO_0000236848" description="Aspartate 1-decarboxylase alpha chain" evidence="1">
    <location>
        <begin position="25"/>
        <end position="131"/>
    </location>
</feature>
<feature type="active site" description="Schiff-base intermediate with substrate; via pyruvic acid" evidence="1">
    <location>
        <position position="25"/>
    </location>
</feature>
<feature type="active site" description="Proton donor" evidence="1">
    <location>
        <position position="58"/>
    </location>
</feature>
<feature type="binding site" evidence="1">
    <location>
        <position position="57"/>
    </location>
    <ligand>
        <name>substrate</name>
    </ligand>
</feature>
<feature type="binding site" evidence="1">
    <location>
        <begin position="73"/>
        <end position="75"/>
    </location>
    <ligand>
        <name>substrate</name>
    </ligand>
</feature>
<feature type="modified residue" description="Pyruvic acid (Ser)" evidence="1">
    <location>
        <position position="25"/>
    </location>
</feature>
<protein>
    <recommendedName>
        <fullName evidence="1">Aspartate 1-decarboxylase</fullName>
        <ecNumber evidence="1">4.1.1.11</ecNumber>
    </recommendedName>
    <alternativeName>
        <fullName evidence="1">Aspartate alpha-decarboxylase</fullName>
    </alternativeName>
    <component>
        <recommendedName>
            <fullName evidence="1">Aspartate 1-decarboxylase beta chain</fullName>
        </recommendedName>
    </component>
    <component>
        <recommendedName>
            <fullName evidence="1">Aspartate 1-decarboxylase alpha chain</fullName>
        </recommendedName>
    </component>
</protein>
<sequence>MRRTFFKAKIHRATVTHADLEYEGSVSIDEDLLEAAGIWEYEAVHVWNITRGTRLQTYAIKGERGSGIICINGAAAHLNRPGDMVILATFAELEEAEARDFKPTVVLVDRQNKIVAKDAVEVPGPARRVTA</sequence>
<organism>
    <name type="scientific">Anaeromyxobacter dehalogenans (strain 2CP-C)</name>
    <dbReference type="NCBI Taxonomy" id="290397"/>
    <lineage>
        <taxon>Bacteria</taxon>
        <taxon>Pseudomonadati</taxon>
        <taxon>Myxococcota</taxon>
        <taxon>Myxococcia</taxon>
        <taxon>Myxococcales</taxon>
        <taxon>Cystobacterineae</taxon>
        <taxon>Anaeromyxobacteraceae</taxon>
        <taxon>Anaeromyxobacter</taxon>
    </lineage>
</organism>
<reference key="1">
    <citation type="submission" date="2006-01" db="EMBL/GenBank/DDBJ databases">
        <title>Complete sequence of Anaeromyxobacter dehalogenans 2CP-C.</title>
        <authorList>
            <person name="Copeland A."/>
            <person name="Lucas S."/>
            <person name="Lapidus A."/>
            <person name="Barry K."/>
            <person name="Detter J.C."/>
            <person name="Glavina T."/>
            <person name="Hammon N."/>
            <person name="Israni S."/>
            <person name="Pitluck S."/>
            <person name="Brettin T."/>
            <person name="Bruce D."/>
            <person name="Han C."/>
            <person name="Tapia R."/>
            <person name="Gilna P."/>
            <person name="Kiss H."/>
            <person name="Schmutz J."/>
            <person name="Larimer F."/>
            <person name="Land M."/>
            <person name="Kyrpides N."/>
            <person name="Anderson I."/>
            <person name="Sanford R.A."/>
            <person name="Ritalahti K.M."/>
            <person name="Thomas H.S."/>
            <person name="Kirby J.R."/>
            <person name="Zhulin I.B."/>
            <person name="Loeffler F.E."/>
            <person name="Richardson P."/>
        </authorList>
    </citation>
    <scope>NUCLEOTIDE SEQUENCE [LARGE SCALE GENOMIC DNA]</scope>
    <source>
        <strain>2CP-C</strain>
    </source>
</reference>
<keyword id="KW-0068">Autocatalytic cleavage</keyword>
<keyword id="KW-0963">Cytoplasm</keyword>
<keyword id="KW-0210">Decarboxylase</keyword>
<keyword id="KW-0456">Lyase</keyword>
<keyword id="KW-0566">Pantothenate biosynthesis</keyword>
<keyword id="KW-0670">Pyruvate</keyword>
<keyword id="KW-1185">Reference proteome</keyword>
<keyword id="KW-0704">Schiff base</keyword>
<keyword id="KW-0865">Zymogen</keyword>
<comment type="function">
    <text evidence="1">Catalyzes the pyruvoyl-dependent decarboxylation of aspartate to produce beta-alanine.</text>
</comment>
<comment type="catalytic activity">
    <reaction evidence="1">
        <text>L-aspartate + H(+) = beta-alanine + CO2</text>
        <dbReference type="Rhea" id="RHEA:19497"/>
        <dbReference type="ChEBI" id="CHEBI:15378"/>
        <dbReference type="ChEBI" id="CHEBI:16526"/>
        <dbReference type="ChEBI" id="CHEBI:29991"/>
        <dbReference type="ChEBI" id="CHEBI:57966"/>
        <dbReference type="EC" id="4.1.1.11"/>
    </reaction>
</comment>
<comment type="cofactor">
    <cofactor evidence="1">
        <name>pyruvate</name>
        <dbReference type="ChEBI" id="CHEBI:15361"/>
    </cofactor>
    <text evidence="1">Binds 1 pyruvoyl group covalently per subunit.</text>
</comment>
<comment type="pathway">
    <text evidence="1">Cofactor biosynthesis; (R)-pantothenate biosynthesis; beta-alanine from L-aspartate: step 1/1.</text>
</comment>
<comment type="subunit">
    <text evidence="1">Heterooctamer of four alpha and four beta subunits.</text>
</comment>
<comment type="subcellular location">
    <subcellularLocation>
        <location evidence="1">Cytoplasm</location>
    </subcellularLocation>
</comment>
<comment type="PTM">
    <text evidence="1">Is synthesized initially as an inactive proenzyme, which is activated by self-cleavage at a specific serine bond to produce a beta-subunit with a hydroxyl group at its C-terminus and an alpha-subunit with a pyruvoyl group at its N-terminus.</text>
</comment>
<comment type="similarity">
    <text evidence="1">Belongs to the PanD family.</text>
</comment>
<accession>Q2IGV9</accession>
<proteinExistence type="inferred from homology"/>